<protein>
    <recommendedName>
        <fullName evidence="1">tRNA modification GTPase MnmE</fullName>
        <ecNumber evidence="1">3.6.-.-</ecNumber>
    </recommendedName>
</protein>
<reference key="1">
    <citation type="submission" date="2007-02" db="EMBL/GenBank/DDBJ databases">
        <title>Complete sequence of Clostridium thermocellum ATCC 27405.</title>
        <authorList>
            <consortium name="US DOE Joint Genome Institute"/>
            <person name="Copeland A."/>
            <person name="Lucas S."/>
            <person name="Lapidus A."/>
            <person name="Barry K."/>
            <person name="Detter J.C."/>
            <person name="Glavina del Rio T."/>
            <person name="Hammon N."/>
            <person name="Israni S."/>
            <person name="Dalin E."/>
            <person name="Tice H."/>
            <person name="Pitluck S."/>
            <person name="Chertkov O."/>
            <person name="Brettin T."/>
            <person name="Bruce D."/>
            <person name="Han C."/>
            <person name="Tapia R."/>
            <person name="Gilna P."/>
            <person name="Schmutz J."/>
            <person name="Larimer F."/>
            <person name="Land M."/>
            <person name="Hauser L."/>
            <person name="Kyrpides N."/>
            <person name="Mikhailova N."/>
            <person name="Wu J.H.D."/>
            <person name="Newcomb M."/>
            <person name="Richardson P."/>
        </authorList>
    </citation>
    <scope>NUCLEOTIDE SEQUENCE [LARGE SCALE GENOMIC DNA]</scope>
    <source>
        <strain>ATCC 27405 / DSM 1237 / JCM 9322 / NBRC 103400 / NCIMB 10682 / NRRL B-4536 / VPI 7372</strain>
    </source>
</reference>
<name>MNME_ACET2</name>
<proteinExistence type="inferred from homology"/>
<evidence type="ECO:0000255" key="1">
    <source>
        <dbReference type="HAMAP-Rule" id="MF_00379"/>
    </source>
</evidence>
<dbReference type="EC" id="3.6.-.-" evidence="1"/>
<dbReference type="EMBL" id="CP000568">
    <property type="protein sequence ID" value="ABN53567.1"/>
    <property type="molecule type" value="Genomic_DNA"/>
</dbReference>
<dbReference type="RefSeq" id="WP_003516470.1">
    <property type="nucleotide sequence ID" value="NC_009012.1"/>
</dbReference>
<dbReference type="SMR" id="A3DHY8"/>
<dbReference type="STRING" id="203119.Cthe_2365"/>
<dbReference type="GeneID" id="35803403"/>
<dbReference type="KEGG" id="cth:Cthe_2365"/>
<dbReference type="eggNOG" id="COG0486">
    <property type="taxonomic scope" value="Bacteria"/>
</dbReference>
<dbReference type="HOGENOM" id="CLU_019624_4_1_9"/>
<dbReference type="OrthoDB" id="9805918at2"/>
<dbReference type="Proteomes" id="UP000002145">
    <property type="component" value="Chromosome"/>
</dbReference>
<dbReference type="GO" id="GO:0005829">
    <property type="term" value="C:cytosol"/>
    <property type="evidence" value="ECO:0007669"/>
    <property type="project" value="TreeGrafter"/>
</dbReference>
<dbReference type="GO" id="GO:0005525">
    <property type="term" value="F:GTP binding"/>
    <property type="evidence" value="ECO:0007669"/>
    <property type="project" value="UniProtKB-UniRule"/>
</dbReference>
<dbReference type="GO" id="GO:0003924">
    <property type="term" value="F:GTPase activity"/>
    <property type="evidence" value="ECO:0007669"/>
    <property type="project" value="UniProtKB-UniRule"/>
</dbReference>
<dbReference type="GO" id="GO:0046872">
    <property type="term" value="F:metal ion binding"/>
    <property type="evidence" value="ECO:0007669"/>
    <property type="project" value="UniProtKB-KW"/>
</dbReference>
<dbReference type="GO" id="GO:0030488">
    <property type="term" value="P:tRNA methylation"/>
    <property type="evidence" value="ECO:0007669"/>
    <property type="project" value="TreeGrafter"/>
</dbReference>
<dbReference type="GO" id="GO:0002098">
    <property type="term" value="P:tRNA wobble uridine modification"/>
    <property type="evidence" value="ECO:0007669"/>
    <property type="project" value="TreeGrafter"/>
</dbReference>
<dbReference type="CDD" id="cd04164">
    <property type="entry name" value="trmE"/>
    <property type="match status" value="1"/>
</dbReference>
<dbReference type="CDD" id="cd14858">
    <property type="entry name" value="TrmE_N"/>
    <property type="match status" value="1"/>
</dbReference>
<dbReference type="FunFam" id="3.30.1360.120:FF:000003">
    <property type="entry name" value="tRNA modification GTPase MnmE"/>
    <property type="match status" value="1"/>
</dbReference>
<dbReference type="FunFam" id="3.40.50.300:FF:000494">
    <property type="entry name" value="tRNA modification GTPase MnmE"/>
    <property type="match status" value="1"/>
</dbReference>
<dbReference type="Gene3D" id="3.40.50.300">
    <property type="entry name" value="P-loop containing nucleotide triphosphate hydrolases"/>
    <property type="match status" value="1"/>
</dbReference>
<dbReference type="Gene3D" id="3.30.1360.120">
    <property type="entry name" value="Probable tRNA modification gtpase trme, domain 1"/>
    <property type="match status" value="1"/>
</dbReference>
<dbReference type="Gene3D" id="1.20.120.430">
    <property type="entry name" value="tRNA modification GTPase MnmE domain 2"/>
    <property type="match status" value="1"/>
</dbReference>
<dbReference type="HAMAP" id="MF_00379">
    <property type="entry name" value="GTPase_MnmE"/>
    <property type="match status" value="1"/>
</dbReference>
<dbReference type="InterPro" id="IPR031168">
    <property type="entry name" value="G_TrmE"/>
</dbReference>
<dbReference type="InterPro" id="IPR006073">
    <property type="entry name" value="GTP-bd"/>
</dbReference>
<dbReference type="InterPro" id="IPR018948">
    <property type="entry name" value="GTP-bd_TrmE_N"/>
</dbReference>
<dbReference type="InterPro" id="IPR004520">
    <property type="entry name" value="GTPase_MnmE"/>
</dbReference>
<dbReference type="InterPro" id="IPR027368">
    <property type="entry name" value="MnmE_dom2"/>
</dbReference>
<dbReference type="InterPro" id="IPR025867">
    <property type="entry name" value="MnmE_helical"/>
</dbReference>
<dbReference type="InterPro" id="IPR027417">
    <property type="entry name" value="P-loop_NTPase"/>
</dbReference>
<dbReference type="InterPro" id="IPR005225">
    <property type="entry name" value="Small_GTP-bd"/>
</dbReference>
<dbReference type="InterPro" id="IPR027266">
    <property type="entry name" value="TrmE/GcvT_dom1"/>
</dbReference>
<dbReference type="NCBIfam" id="TIGR00450">
    <property type="entry name" value="mnmE_trmE_thdF"/>
    <property type="match status" value="1"/>
</dbReference>
<dbReference type="NCBIfam" id="NF003661">
    <property type="entry name" value="PRK05291.1-3"/>
    <property type="match status" value="1"/>
</dbReference>
<dbReference type="NCBIfam" id="TIGR00231">
    <property type="entry name" value="small_GTP"/>
    <property type="match status" value="1"/>
</dbReference>
<dbReference type="PANTHER" id="PTHR42714">
    <property type="entry name" value="TRNA MODIFICATION GTPASE GTPBP3"/>
    <property type="match status" value="1"/>
</dbReference>
<dbReference type="PANTHER" id="PTHR42714:SF2">
    <property type="entry name" value="TRNA MODIFICATION GTPASE GTPBP3, MITOCHONDRIAL"/>
    <property type="match status" value="1"/>
</dbReference>
<dbReference type="Pfam" id="PF01926">
    <property type="entry name" value="MMR_HSR1"/>
    <property type="match status" value="1"/>
</dbReference>
<dbReference type="Pfam" id="PF12631">
    <property type="entry name" value="MnmE_helical"/>
    <property type="match status" value="1"/>
</dbReference>
<dbReference type="Pfam" id="PF10396">
    <property type="entry name" value="TrmE_N"/>
    <property type="match status" value="1"/>
</dbReference>
<dbReference type="SUPFAM" id="SSF52540">
    <property type="entry name" value="P-loop containing nucleoside triphosphate hydrolases"/>
    <property type="match status" value="1"/>
</dbReference>
<dbReference type="PROSITE" id="PS51709">
    <property type="entry name" value="G_TRME"/>
    <property type="match status" value="1"/>
</dbReference>
<keyword id="KW-0963">Cytoplasm</keyword>
<keyword id="KW-0342">GTP-binding</keyword>
<keyword id="KW-0378">Hydrolase</keyword>
<keyword id="KW-0460">Magnesium</keyword>
<keyword id="KW-0479">Metal-binding</keyword>
<keyword id="KW-0547">Nucleotide-binding</keyword>
<keyword id="KW-0630">Potassium</keyword>
<keyword id="KW-1185">Reference proteome</keyword>
<keyword id="KW-0819">tRNA processing</keyword>
<accession>A3DHY8</accession>
<gene>
    <name evidence="1" type="primary">mnmE</name>
    <name evidence="1" type="synonym">trmE</name>
    <name type="ordered locus">Cthe_2365</name>
</gene>
<feature type="chain" id="PRO_0000345765" description="tRNA modification GTPase MnmE">
    <location>
        <begin position="1"/>
        <end position="459"/>
    </location>
</feature>
<feature type="domain" description="TrmE-type G">
    <location>
        <begin position="221"/>
        <end position="380"/>
    </location>
</feature>
<feature type="binding site" evidence="1">
    <location>
        <position position="23"/>
    </location>
    <ligand>
        <name>(6S)-5-formyl-5,6,7,8-tetrahydrofolate</name>
        <dbReference type="ChEBI" id="CHEBI:57457"/>
    </ligand>
</feature>
<feature type="binding site" evidence="1">
    <location>
        <position position="86"/>
    </location>
    <ligand>
        <name>(6S)-5-formyl-5,6,7,8-tetrahydrofolate</name>
        <dbReference type="ChEBI" id="CHEBI:57457"/>
    </ligand>
</feature>
<feature type="binding site" evidence="1">
    <location>
        <position position="125"/>
    </location>
    <ligand>
        <name>(6S)-5-formyl-5,6,7,8-tetrahydrofolate</name>
        <dbReference type="ChEBI" id="CHEBI:57457"/>
    </ligand>
</feature>
<feature type="binding site" evidence="1">
    <location>
        <begin position="231"/>
        <end position="236"/>
    </location>
    <ligand>
        <name>GTP</name>
        <dbReference type="ChEBI" id="CHEBI:37565"/>
    </ligand>
</feature>
<feature type="binding site" evidence="1">
    <location>
        <position position="231"/>
    </location>
    <ligand>
        <name>K(+)</name>
        <dbReference type="ChEBI" id="CHEBI:29103"/>
    </ligand>
</feature>
<feature type="binding site" evidence="1">
    <location>
        <position position="235"/>
    </location>
    <ligand>
        <name>Mg(2+)</name>
        <dbReference type="ChEBI" id="CHEBI:18420"/>
    </ligand>
</feature>
<feature type="binding site" evidence="1">
    <location>
        <begin position="250"/>
        <end position="256"/>
    </location>
    <ligand>
        <name>GTP</name>
        <dbReference type="ChEBI" id="CHEBI:37565"/>
    </ligand>
</feature>
<feature type="binding site" evidence="1">
    <location>
        <position position="250"/>
    </location>
    <ligand>
        <name>K(+)</name>
        <dbReference type="ChEBI" id="CHEBI:29103"/>
    </ligand>
</feature>
<feature type="binding site" evidence="1">
    <location>
        <position position="252"/>
    </location>
    <ligand>
        <name>K(+)</name>
        <dbReference type="ChEBI" id="CHEBI:29103"/>
    </ligand>
</feature>
<feature type="binding site" evidence="1">
    <location>
        <position position="255"/>
    </location>
    <ligand>
        <name>K(+)</name>
        <dbReference type="ChEBI" id="CHEBI:29103"/>
    </ligand>
</feature>
<feature type="binding site" evidence="1">
    <location>
        <position position="256"/>
    </location>
    <ligand>
        <name>Mg(2+)</name>
        <dbReference type="ChEBI" id="CHEBI:18420"/>
    </ligand>
</feature>
<feature type="binding site" evidence="1">
    <location>
        <begin position="275"/>
        <end position="278"/>
    </location>
    <ligand>
        <name>GTP</name>
        <dbReference type="ChEBI" id="CHEBI:37565"/>
    </ligand>
</feature>
<feature type="binding site" evidence="1">
    <location>
        <position position="459"/>
    </location>
    <ligand>
        <name>(6S)-5-formyl-5,6,7,8-tetrahydrofolate</name>
        <dbReference type="ChEBI" id="CHEBI:57457"/>
    </ligand>
</feature>
<comment type="function">
    <text evidence="1">Exhibits a very high intrinsic GTPase hydrolysis rate. Involved in the addition of a carboxymethylaminomethyl (cmnm) group at the wobble position (U34) of certain tRNAs, forming tRNA-cmnm(5)s(2)U34.</text>
</comment>
<comment type="cofactor">
    <cofactor evidence="1">
        <name>K(+)</name>
        <dbReference type="ChEBI" id="CHEBI:29103"/>
    </cofactor>
    <text evidence="1">Binds 1 potassium ion per subunit.</text>
</comment>
<comment type="subunit">
    <text evidence="1">Homodimer. Heterotetramer of two MnmE and two MnmG subunits.</text>
</comment>
<comment type="subcellular location">
    <subcellularLocation>
        <location evidence="1">Cytoplasm</location>
    </subcellularLocation>
</comment>
<comment type="similarity">
    <text evidence="1">Belongs to the TRAFAC class TrmE-Era-EngA-EngB-Septin-like GTPase superfamily. TrmE GTPase family.</text>
</comment>
<sequence>MYKEDTIAAISTPHGAGGVGIIRISGDKAFEIAERIFRGKKDFKLIRSHTINYGKIVNPENGAVLDEVLLSKMEKPKTFTREDVVEINCHGGMVVLKNILELCIKEGARLAEPGEFTKRAFLNGRIDLSQAEAVIDLINSKTNESSKAAISQLEGKLSRKIKDARSKLIELLAHIEVTVDYPEHDIEEITGNMVYEEIGKIKEKLCDIVKSFERGRIIREGIDAVIIGKPNVGKSSLLNELSGKSKAIVTDIPGTTRDIIEEYININGIPLRIIDTAGIRETEDVVEKIGVEKTHRAIDEADLVIMMIDAKRGMDEDDNRILTMLGDKKLIILINKIDLVDEKQINEIESLLKGRKCIRTSVKEGTGISELENAITELFVQGEVSVNEEILLTNIRHKNLIDMAISSIEKAMESIDGSMPLDLVSIDITDAADYLGQITGESVSEDVMHEIFSKFCLGK</sequence>
<organism>
    <name type="scientific">Acetivibrio thermocellus (strain ATCC 27405 / DSM 1237 / JCM 9322 / NBRC 103400 / NCIMB 10682 / NRRL B-4536 / VPI 7372)</name>
    <name type="common">Clostridium thermocellum</name>
    <dbReference type="NCBI Taxonomy" id="203119"/>
    <lineage>
        <taxon>Bacteria</taxon>
        <taxon>Bacillati</taxon>
        <taxon>Bacillota</taxon>
        <taxon>Clostridia</taxon>
        <taxon>Eubacteriales</taxon>
        <taxon>Oscillospiraceae</taxon>
        <taxon>Acetivibrio</taxon>
    </lineage>
</organism>